<reference key="1">
    <citation type="journal article" date="2000" name="Nature">
        <title>Sequence and analysis of chromosome 1 of the plant Arabidopsis thaliana.</title>
        <authorList>
            <person name="Theologis A."/>
            <person name="Ecker J.R."/>
            <person name="Palm C.J."/>
            <person name="Federspiel N.A."/>
            <person name="Kaul S."/>
            <person name="White O."/>
            <person name="Alonso J."/>
            <person name="Altafi H."/>
            <person name="Araujo R."/>
            <person name="Bowman C.L."/>
            <person name="Brooks S.Y."/>
            <person name="Buehler E."/>
            <person name="Chan A."/>
            <person name="Chao Q."/>
            <person name="Chen H."/>
            <person name="Cheuk R.F."/>
            <person name="Chin C.W."/>
            <person name="Chung M.K."/>
            <person name="Conn L."/>
            <person name="Conway A.B."/>
            <person name="Conway A.R."/>
            <person name="Creasy T.H."/>
            <person name="Dewar K."/>
            <person name="Dunn P."/>
            <person name="Etgu P."/>
            <person name="Feldblyum T.V."/>
            <person name="Feng J.-D."/>
            <person name="Fong B."/>
            <person name="Fujii C.Y."/>
            <person name="Gill J.E."/>
            <person name="Goldsmith A.D."/>
            <person name="Haas B."/>
            <person name="Hansen N.F."/>
            <person name="Hughes B."/>
            <person name="Huizar L."/>
            <person name="Hunter J.L."/>
            <person name="Jenkins J."/>
            <person name="Johnson-Hopson C."/>
            <person name="Khan S."/>
            <person name="Khaykin E."/>
            <person name="Kim C.J."/>
            <person name="Koo H.L."/>
            <person name="Kremenetskaia I."/>
            <person name="Kurtz D.B."/>
            <person name="Kwan A."/>
            <person name="Lam B."/>
            <person name="Langin-Hooper S."/>
            <person name="Lee A."/>
            <person name="Lee J.M."/>
            <person name="Lenz C.A."/>
            <person name="Li J.H."/>
            <person name="Li Y.-P."/>
            <person name="Lin X."/>
            <person name="Liu S.X."/>
            <person name="Liu Z.A."/>
            <person name="Luros J.S."/>
            <person name="Maiti R."/>
            <person name="Marziali A."/>
            <person name="Militscher J."/>
            <person name="Miranda M."/>
            <person name="Nguyen M."/>
            <person name="Nierman W.C."/>
            <person name="Osborne B.I."/>
            <person name="Pai G."/>
            <person name="Peterson J."/>
            <person name="Pham P.K."/>
            <person name="Rizzo M."/>
            <person name="Rooney T."/>
            <person name="Rowley D."/>
            <person name="Sakano H."/>
            <person name="Salzberg S.L."/>
            <person name="Schwartz J.R."/>
            <person name="Shinn P."/>
            <person name="Southwick A.M."/>
            <person name="Sun H."/>
            <person name="Tallon L.J."/>
            <person name="Tambunga G."/>
            <person name="Toriumi M.J."/>
            <person name="Town C.D."/>
            <person name="Utterback T."/>
            <person name="Van Aken S."/>
            <person name="Vaysberg M."/>
            <person name="Vysotskaia V.S."/>
            <person name="Walker M."/>
            <person name="Wu D."/>
            <person name="Yu G."/>
            <person name="Fraser C.M."/>
            <person name="Venter J.C."/>
            <person name="Davis R.W."/>
        </authorList>
    </citation>
    <scope>NUCLEOTIDE SEQUENCE [LARGE SCALE GENOMIC DNA]</scope>
    <source>
        <strain>cv. Columbia</strain>
    </source>
</reference>
<reference key="2">
    <citation type="journal article" date="2017" name="Plant J.">
        <title>Araport11: a complete reannotation of the Arabidopsis thaliana reference genome.</title>
        <authorList>
            <person name="Cheng C.Y."/>
            <person name="Krishnakumar V."/>
            <person name="Chan A.P."/>
            <person name="Thibaud-Nissen F."/>
            <person name="Schobel S."/>
            <person name="Town C.D."/>
        </authorList>
    </citation>
    <scope>GENOME REANNOTATION</scope>
    <source>
        <strain>cv. Columbia</strain>
    </source>
</reference>
<reference key="3">
    <citation type="journal article" date="2003" name="Science">
        <title>Empirical analysis of transcriptional activity in the Arabidopsis genome.</title>
        <authorList>
            <person name="Yamada K."/>
            <person name="Lim J."/>
            <person name="Dale J.M."/>
            <person name="Chen H."/>
            <person name="Shinn P."/>
            <person name="Palm C.J."/>
            <person name="Southwick A.M."/>
            <person name="Wu H.C."/>
            <person name="Kim C.J."/>
            <person name="Nguyen M."/>
            <person name="Pham P.K."/>
            <person name="Cheuk R.F."/>
            <person name="Karlin-Newmann G."/>
            <person name="Liu S.X."/>
            <person name="Lam B."/>
            <person name="Sakano H."/>
            <person name="Wu T."/>
            <person name="Yu G."/>
            <person name="Miranda M."/>
            <person name="Quach H.L."/>
            <person name="Tripp M."/>
            <person name="Chang C.H."/>
            <person name="Lee J.M."/>
            <person name="Toriumi M.J."/>
            <person name="Chan M.M."/>
            <person name="Tang C.C."/>
            <person name="Onodera C.S."/>
            <person name="Deng J.M."/>
            <person name="Akiyama K."/>
            <person name="Ansari Y."/>
            <person name="Arakawa T."/>
            <person name="Banh J."/>
            <person name="Banno F."/>
            <person name="Bowser L."/>
            <person name="Brooks S.Y."/>
            <person name="Carninci P."/>
            <person name="Chao Q."/>
            <person name="Choy N."/>
            <person name="Enju A."/>
            <person name="Goldsmith A.D."/>
            <person name="Gurjal M."/>
            <person name="Hansen N.F."/>
            <person name="Hayashizaki Y."/>
            <person name="Johnson-Hopson C."/>
            <person name="Hsuan V.W."/>
            <person name="Iida K."/>
            <person name="Karnes M."/>
            <person name="Khan S."/>
            <person name="Koesema E."/>
            <person name="Ishida J."/>
            <person name="Jiang P.X."/>
            <person name="Jones T."/>
            <person name="Kawai J."/>
            <person name="Kamiya A."/>
            <person name="Meyers C."/>
            <person name="Nakajima M."/>
            <person name="Narusaka M."/>
            <person name="Seki M."/>
            <person name="Sakurai T."/>
            <person name="Satou M."/>
            <person name="Tamse R."/>
            <person name="Vaysberg M."/>
            <person name="Wallender E.K."/>
            <person name="Wong C."/>
            <person name="Yamamura Y."/>
            <person name="Yuan S."/>
            <person name="Shinozaki K."/>
            <person name="Davis R.W."/>
            <person name="Theologis A."/>
            <person name="Ecker J.R."/>
        </authorList>
    </citation>
    <scope>NUCLEOTIDE SEQUENCE [LARGE SCALE MRNA]</scope>
    <source>
        <strain>cv. Columbia</strain>
    </source>
</reference>
<reference key="4">
    <citation type="journal article" date="2006" name="Plant Physiol.">
        <title>Genome-wide analysis of the ERF gene family in Arabidopsis and rice.</title>
        <authorList>
            <person name="Nakano T."/>
            <person name="Suzuki K."/>
            <person name="Fujimura T."/>
            <person name="Shinshi H."/>
        </authorList>
    </citation>
    <scope>GENE FAMILY</scope>
    <scope>NOMENCLATURE</scope>
</reference>
<reference key="5">
    <citation type="journal article" date="2008" name="Curr. Biol.">
        <title>The balance between CONSTANS and TEMPRANILLO activities determines FT expression to trigger flowering.</title>
        <authorList>
            <person name="Castillejo C."/>
            <person name="Pelaz S."/>
        </authorList>
    </citation>
    <scope>FUNCTION</scope>
    <scope>TISSUE SPECIFICITY</scope>
    <scope>INDUCTION</scope>
    <scope>INTERACTION WITH FT</scope>
</reference>
<reference key="6">
    <citation type="journal article" date="2008" name="Trends Plant Sci.">
        <title>The plant B3 superfamily.</title>
        <authorList>
            <person name="Swaminathan K."/>
            <person name="Peterson K."/>
            <person name="Jack T."/>
        </authorList>
    </citation>
    <scope>GENE FAMILY</scope>
</reference>
<name>RAVL1_ARATH</name>
<proteinExistence type="evidence at protein level"/>
<organism>
    <name type="scientific">Arabidopsis thaliana</name>
    <name type="common">Mouse-ear cress</name>
    <dbReference type="NCBI Taxonomy" id="3702"/>
    <lineage>
        <taxon>Eukaryota</taxon>
        <taxon>Viridiplantae</taxon>
        <taxon>Streptophyta</taxon>
        <taxon>Embryophyta</taxon>
        <taxon>Tracheophyta</taxon>
        <taxon>Spermatophyta</taxon>
        <taxon>Magnoliopsida</taxon>
        <taxon>eudicotyledons</taxon>
        <taxon>Gunneridae</taxon>
        <taxon>Pentapetalae</taxon>
        <taxon>rosids</taxon>
        <taxon>malvids</taxon>
        <taxon>Brassicales</taxon>
        <taxon>Brassicaceae</taxon>
        <taxon>Camelineae</taxon>
        <taxon>Arabidopsis</taxon>
    </lineage>
</organism>
<accession>Q9C6M5</accession>
<evidence type="ECO:0000255" key="1">
    <source>
        <dbReference type="PROSITE-ProRule" id="PRU00326"/>
    </source>
</evidence>
<evidence type="ECO:0000255" key="2">
    <source>
        <dbReference type="PROSITE-ProRule" id="PRU00366"/>
    </source>
</evidence>
<evidence type="ECO:0000256" key="3">
    <source>
        <dbReference type="SAM" id="MobiDB-lite"/>
    </source>
</evidence>
<evidence type="ECO:0000269" key="4">
    <source>
    </source>
</evidence>
<evidence type="ECO:0000305" key="5"/>
<evidence type="ECO:0007829" key="6">
    <source>
        <dbReference type="PDB" id="7ET5"/>
    </source>
</evidence>
<evidence type="ECO:0007829" key="7">
    <source>
        <dbReference type="PDB" id="7ET6"/>
    </source>
</evidence>
<feature type="chain" id="PRO_0000290433" description="AP2/ERF and B3 domain-containing transcription repressor TEM1">
    <location>
        <begin position="1"/>
        <end position="361"/>
    </location>
</feature>
<feature type="DNA-binding region" description="AP2/ERF" evidence="2">
    <location>
        <begin position="71"/>
        <end position="126"/>
    </location>
</feature>
<feature type="DNA-binding region" description="TF-B3" evidence="1">
    <location>
        <begin position="195"/>
        <end position="306"/>
    </location>
</feature>
<feature type="region of interest" description="Disordered" evidence="3">
    <location>
        <begin position="1"/>
        <end position="73"/>
    </location>
</feature>
<feature type="compositionally biased region" description="Low complexity" evidence="3">
    <location>
        <begin position="9"/>
        <end position="27"/>
    </location>
</feature>
<feature type="strand" evidence="6">
    <location>
        <begin position="75"/>
        <end position="77"/>
    </location>
</feature>
<feature type="strand" evidence="6">
    <location>
        <begin position="83"/>
        <end position="89"/>
    </location>
</feature>
<feature type="strand" evidence="6">
    <location>
        <begin position="92"/>
        <end position="101"/>
    </location>
</feature>
<feature type="helix" evidence="6">
    <location>
        <begin position="102"/>
        <end position="117"/>
    </location>
</feature>
<feature type="helix" evidence="6">
    <location>
        <begin position="118"/>
        <end position="120"/>
    </location>
</feature>
<feature type="helix" evidence="6">
    <location>
        <begin position="134"/>
        <end position="140"/>
    </location>
</feature>
<feature type="helix" evidence="6">
    <location>
        <begin position="144"/>
        <end position="152"/>
    </location>
</feature>
<feature type="helix" evidence="6">
    <location>
        <begin position="156"/>
        <end position="163"/>
    </location>
</feature>
<feature type="strand" evidence="7">
    <location>
        <begin position="191"/>
        <end position="198"/>
    </location>
</feature>
<feature type="turn" evidence="7">
    <location>
        <begin position="201"/>
        <end position="204"/>
    </location>
</feature>
<feature type="strand" evidence="7">
    <location>
        <begin position="210"/>
        <end position="212"/>
    </location>
</feature>
<feature type="helix" evidence="7">
    <location>
        <begin position="214"/>
        <end position="220"/>
    </location>
</feature>
<feature type="turn" evidence="7">
    <location>
        <begin position="223"/>
        <end position="226"/>
    </location>
</feature>
<feature type="strand" evidence="7">
    <location>
        <begin position="240"/>
        <end position="245"/>
    </location>
</feature>
<feature type="strand" evidence="7">
    <location>
        <begin position="251"/>
        <end position="259"/>
    </location>
</feature>
<feature type="turn" evidence="7">
    <location>
        <begin position="260"/>
        <end position="263"/>
    </location>
</feature>
<feature type="strand" evidence="7">
    <location>
        <begin position="264"/>
        <end position="267"/>
    </location>
</feature>
<feature type="helix" evidence="7">
    <location>
        <begin position="271"/>
        <end position="278"/>
    </location>
</feature>
<feature type="strand" evidence="7">
    <location>
        <begin position="285"/>
        <end position="293"/>
    </location>
</feature>
<feature type="strand" evidence="7">
    <location>
        <begin position="298"/>
        <end position="303"/>
    </location>
</feature>
<keyword id="KW-0002">3D-structure</keyword>
<keyword id="KW-0238">DNA-binding</keyword>
<keyword id="KW-0936">Ethylene signaling pathway</keyword>
<keyword id="KW-0539">Nucleus</keyword>
<keyword id="KW-1185">Reference proteome</keyword>
<keyword id="KW-0678">Repressor</keyword>
<keyword id="KW-0804">Transcription</keyword>
<keyword id="KW-0805">Transcription regulation</keyword>
<sequence length="361" mass="40558">MEYSCVDDSSTTSESLSISTTPKPTTTTEKKLSSPPATSMRLYRMGSGGSSVVLDSENGVETESRKLPSSKYKGVVPQPNGRWGAQIYEKHQRVWLGTFNEEEEAASSYDIAVRRFRGRDAVTNFKSQVDGNDAESAFLDAHSKAEIVDMLRKHTYADEFEQSRRKFVNGDGKRSGLETATYGNDAVLRAREVLFEKTVTPSDVGKLNRLVIPKQHAEKHFPLPAMTTAMGMNPSPTKGVLINLEDRTGKVWRFRYSYWNSSQSYVLTKGWSRFVKEKNLRAGDVVCFERSTGPDRQLYIHWKVRSSPVQTVVRLFGVNIFNVSNEKPNDVAVECVGKKRSREDDLFSLGCSKKQAIINIL</sequence>
<protein>
    <recommendedName>
        <fullName>AP2/ERF and B3 domain-containing transcription repressor TEM1</fullName>
    </recommendedName>
    <alternativeName>
        <fullName>Protein TEMPRANILLO 1</fullName>
    </alternativeName>
    <alternativeName>
        <fullName>RAV1-like ethylene-responsive transcription factor TEM1</fullName>
    </alternativeName>
</protein>
<dbReference type="EMBL" id="AC079281">
    <property type="protein sequence ID" value="AAG50808.1"/>
    <property type="molecule type" value="Genomic_DNA"/>
</dbReference>
<dbReference type="EMBL" id="CP002684">
    <property type="protein sequence ID" value="AEE30642.1"/>
    <property type="molecule type" value="Genomic_DNA"/>
</dbReference>
<dbReference type="EMBL" id="AY091069">
    <property type="protein sequence ID" value="AAM13889.1"/>
    <property type="molecule type" value="mRNA"/>
</dbReference>
<dbReference type="EMBL" id="AY122941">
    <property type="protein sequence ID" value="AAM67474.1"/>
    <property type="molecule type" value="mRNA"/>
</dbReference>
<dbReference type="PIR" id="A86386">
    <property type="entry name" value="A86386"/>
</dbReference>
<dbReference type="RefSeq" id="NP_173927.1">
    <property type="nucleotide sequence ID" value="NM_102367.3"/>
</dbReference>
<dbReference type="PDB" id="7ET4">
    <property type="method" value="X-ray"/>
    <property type="resolution" value="2.70 A"/>
    <property type="chains" value="A/D/G/J=50-170"/>
</dbReference>
<dbReference type="PDB" id="7ET5">
    <property type="method" value="X-ray"/>
    <property type="resolution" value="1.05 A"/>
    <property type="chains" value="A=50-170"/>
</dbReference>
<dbReference type="PDB" id="7ET6">
    <property type="method" value="X-ray"/>
    <property type="resolution" value="2.70 A"/>
    <property type="chains" value="A/D=186-309"/>
</dbReference>
<dbReference type="PDBsum" id="7ET4"/>
<dbReference type="PDBsum" id="7ET5"/>
<dbReference type="PDBsum" id="7ET6"/>
<dbReference type="SMR" id="Q9C6M5"/>
<dbReference type="BioGRID" id="24380">
    <property type="interactions" value="9"/>
</dbReference>
<dbReference type="DIP" id="DIP-59693N"/>
<dbReference type="FunCoup" id="Q9C6M5">
    <property type="interactions" value="132"/>
</dbReference>
<dbReference type="IntAct" id="Q9C6M5">
    <property type="interactions" value="5"/>
</dbReference>
<dbReference type="STRING" id="3702.Q9C6M5"/>
<dbReference type="PaxDb" id="3702-AT1G25560.1"/>
<dbReference type="ProteomicsDB" id="236486"/>
<dbReference type="EnsemblPlants" id="AT1G25560.1">
    <property type="protein sequence ID" value="AT1G25560.1"/>
    <property type="gene ID" value="AT1G25560"/>
</dbReference>
<dbReference type="GeneID" id="839143"/>
<dbReference type="Gramene" id="AT1G25560.1">
    <property type="protein sequence ID" value="AT1G25560.1"/>
    <property type="gene ID" value="AT1G25560"/>
</dbReference>
<dbReference type="KEGG" id="ath:AT1G25560"/>
<dbReference type="Araport" id="AT1G25560"/>
<dbReference type="TAIR" id="AT1G25560">
    <property type="gene designation" value="TEM1"/>
</dbReference>
<dbReference type="eggNOG" id="ENOG502QRVI">
    <property type="taxonomic scope" value="Eukaryota"/>
</dbReference>
<dbReference type="HOGENOM" id="CLU_038898_0_0_1"/>
<dbReference type="InParanoid" id="Q9C6M5"/>
<dbReference type="OMA" id="KQTMINA"/>
<dbReference type="PhylomeDB" id="Q9C6M5"/>
<dbReference type="PRO" id="PR:Q9C6M5"/>
<dbReference type="Proteomes" id="UP000006548">
    <property type="component" value="Chromosome 1"/>
</dbReference>
<dbReference type="ExpressionAtlas" id="Q9C6M5">
    <property type="expression patterns" value="baseline and differential"/>
</dbReference>
<dbReference type="GO" id="GO:0005634">
    <property type="term" value="C:nucleus"/>
    <property type="evidence" value="ECO:0007669"/>
    <property type="project" value="UniProtKB-SubCell"/>
</dbReference>
<dbReference type="GO" id="GO:0003700">
    <property type="term" value="F:DNA-binding transcription factor activity"/>
    <property type="evidence" value="ECO:0000250"/>
    <property type="project" value="TAIR"/>
</dbReference>
<dbReference type="GO" id="GO:0000976">
    <property type="term" value="F:transcription cis-regulatory region binding"/>
    <property type="evidence" value="ECO:0000353"/>
    <property type="project" value="TAIR"/>
</dbReference>
<dbReference type="GO" id="GO:0071456">
    <property type="term" value="P:cellular response to hypoxia"/>
    <property type="evidence" value="ECO:0007007"/>
    <property type="project" value="TAIR"/>
</dbReference>
<dbReference type="GO" id="GO:0009873">
    <property type="term" value="P:ethylene-activated signaling pathway"/>
    <property type="evidence" value="ECO:0007669"/>
    <property type="project" value="UniProtKB-KW"/>
</dbReference>
<dbReference type="GO" id="GO:0048573">
    <property type="term" value="P:photoperiodism, flowering"/>
    <property type="evidence" value="ECO:0000315"/>
    <property type="project" value="TAIR"/>
</dbReference>
<dbReference type="CDD" id="cd00018">
    <property type="entry name" value="AP2"/>
    <property type="match status" value="1"/>
</dbReference>
<dbReference type="CDD" id="cd10017">
    <property type="entry name" value="B3_DNA"/>
    <property type="match status" value="1"/>
</dbReference>
<dbReference type="FunFam" id="3.30.730.10:FF:000008">
    <property type="entry name" value="AP2 domain-containing protein RAP2.8"/>
    <property type="match status" value="1"/>
</dbReference>
<dbReference type="FunFam" id="2.40.330.10:FF:000007">
    <property type="entry name" value="AP2/ERF and B3 domain-containing transcription factor RAV1"/>
    <property type="match status" value="1"/>
</dbReference>
<dbReference type="Gene3D" id="3.30.730.10">
    <property type="entry name" value="AP2/ERF domain"/>
    <property type="match status" value="1"/>
</dbReference>
<dbReference type="Gene3D" id="2.40.330.10">
    <property type="entry name" value="DNA-binding pseudobarrel domain"/>
    <property type="match status" value="1"/>
</dbReference>
<dbReference type="InterPro" id="IPR001471">
    <property type="entry name" value="AP2/ERF_dom"/>
</dbReference>
<dbReference type="InterPro" id="IPR036955">
    <property type="entry name" value="AP2/ERF_dom_sf"/>
</dbReference>
<dbReference type="InterPro" id="IPR003340">
    <property type="entry name" value="B3_DNA-bd"/>
</dbReference>
<dbReference type="InterPro" id="IPR016177">
    <property type="entry name" value="DNA-bd_dom_sf"/>
</dbReference>
<dbReference type="InterPro" id="IPR015300">
    <property type="entry name" value="DNA-bd_pseudobarrel_sf"/>
</dbReference>
<dbReference type="InterPro" id="IPR044800">
    <property type="entry name" value="LEC2-like"/>
</dbReference>
<dbReference type="PANTHER" id="PTHR31140:SF109">
    <property type="entry name" value="AP2_ERF AND B3 DOMAIN-CONTAINING TRANSCRIPTION REPRESSOR TEM1"/>
    <property type="match status" value="1"/>
</dbReference>
<dbReference type="PANTHER" id="PTHR31140">
    <property type="entry name" value="B3 DOMAIN-CONTAINING TRANSCRIPTION FACTOR ABI3"/>
    <property type="match status" value="1"/>
</dbReference>
<dbReference type="Pfam" id="PF02362">
    <property type="entry name" value="B3"/>
    <property type="match status" value="1"/>
</dbReference>
<dbReference type="SMART" id="SM00380">
    <property type="entry name" value="AP2"/>
    <property type="match status" value="1"/>
</dbReference>
<dbReference type="SMART" id="SM01019">
    <property type="entry name" value="B3"/>
    <property type="match status" value="1"/>
</dbReference>
<dbReference type="SUPFAM" id="SSF54171">
    <property type="entry name" value="DNA-binding domain"/>
    <property type="match status" value="1"/>
</dbReference>
<dbReference type="SUPFAM" id="SSF101936">
    <property type="entry name" value="DNA-binding pseudobarrel domain"/>
    <property type="match status" value="1"/>
</dbReference>
<dbReference type="PROSITE" id="PS51032">
    <property type="entry name" value="AP2_ERF"/>
    <property type="match status" value="1"/>
</dbReference>
<dbReference type="PROSITE" id="PS50863">
    <property type="entry name" value="B3"/>
    <property type="match status" value="1"/>
</dbReference>
<gene>
    <name type="primary">TEM1</name>
    <name type="ordered locus">At1g25560</name>
    <name type="ORF">F2J7.3</name>
</gene>
<comment type="function">
    <text evidence="4">Transcriptional repressor of flowering time on long day plants. Acts directly on FT expression by binding 5'-CAACA-3' and 5'-CACCTG-3 sequences. Functionally redundant with TEM2.</text>
</comment>
<comment type="subunit">
    <text evidence="4">Interacts with FT.</text>
</comment>
<comment type="interaction">
    <interactant intactId="EBI-15221122">
        <id>Q9C6M5</id>
    </interactant>
    <interactant intactId="EBI-446380">
        <id>Q9SQI2</id>
        <label>GI</label>
    </interactant>
    <organismsDiffer>false</organismsDiffer>
    <experiments>2</experiments>
</comment>
<comment type="subcellular location">
    <subcellularLocation>
        <location evidence="5">Nucleus</location>
    </subcellularLocation>
</comment>
<comment type="tissue specificity">
    <text evidence="4">Expressed in leaves.</text>
</comment>
<comment type="induction">
    <text evidence="4">Expressed with a circadian rhythm showing a peak at dawn.</text>
</comment>
<comment type="similarity">
    <text evidence="5">Belongs to the AP2/ERF transcription factor family. RAV subfamily.</text>
</comment>